<sequence>MKKILAEIAYDGSLYHGFQIQPTKPTIQGEIEKALEKINKTKVKIQSAGRTDKGVHAKRQIISFYIKININLKNLKTAINSLLKNDIRIIKLKYVSNEFQPRFHAKKRKYTYYILNNENHYPWEEYQAYYVRKKLNINRLNTMAEMLIGLHDFTTFSCIRDQTNSKLKEIYLAKFKKKNKFIVFEIIGSSFLWKMVRSIVGTMIDIEIKNESVDTFIKILKSKNRKYARTTAPAKALFLDRVFYE</sequence>
<gene>
    <name evidence="1" type="primary">truA</name>
    <name type="ordered locus">BRE_17</name>
</gene>
<accession>B5RQJ5</accession>
<organism>
    <name type="scientific">Borrelia recurrentis (strain A1)</name>
    <dbReference type="NCBI Taxonomy" id="412418"/>
    <lineage>
        <taxon>Bacteria</taxon>
        <taxon>Pseudomonadati</taxon>
        <taxon>Spirochaetota</taxon>
        <taxon>Spirochaetia</taxon>
        <taxon>Spirochaetales</taxon>
        <taxon>Borreliaceae</taxon>
        <taxon>Borrelia</taxon>
    </lineage>
</organism>
<reference key="1">
    <citation type="journal article" date="2008" name="PLoS Genet.">
        <title>The genome of Borrelia recurrentis, the agent of deadly louse-borne relapsing fever, is a degraded subset of tick-borne Borrelia duttonii.</title>
        <authorList>
            <person name="Lescot M."/>
            <person name="Audic S."/>
            <person name="Robert C."/>
            <person name="Nguyen T.T."/>
            <person name="Blanc G."/>
            <person name="Cutler S.J."/>
            <person name="Wincker P."/>
            <person name="Couloux A."/>
            <person name="Claverie J.-M."/>
            <person name="Raoult D."/>
            <person name="Drancourt M."/>
        </authorList>
    </citation>
    <scope>NUCLEOTIDE SEQUENCE [LARGE SCALE GENOMIC DNA]</scope>
    <source>
        <strain>A1</strain>
    </source>
</reference>
<feature type="chain" id="PRO_1000097723" description="tRNA pseudouridine synthase A">
    <location>
        <begin position="1"/>
        <end position="245"/>
    </location>
</feature>
<feature type="active site" description="Nucleophile" evidence="1">
    <location>
        <position position="52"/>
    </location>
</feature>
<feature type="binding site" evidence="1">
    <location>
        <position position="110"/>
    </location>
    <ligand>
        <name>substrate</name>
    </ligand>
</feature>
<comment type="function">
    <text evidence="1">Formation of pseudouridine at positions 38, 39 and 40 in the anticodon stem and loop of transfer RNAs.</text>
</comment>
<comment type="catalytic activity">
    <reaction evidence="1">
        <text>uridine(38/39/40) in tRNA = pseudouridine(38/39/40) in tRNA</text>
        <dbReference type="Rhea" id="RHEA:22376"/>
        <dbReference type="Rhea" id="RHEA-COMP:10085"/>
        <dbReference type="Rhea" id="RHEA-COMP:10087"/>
        <dbReference type="ChEBI" id="CHEBI:65314"/>
        <dbReference type="ChEBI" id="CHEBI:65315"/>
        <dbReference type="EC" id="5.4.99.12"/>
    </reaction>
</comment>
<comment type="subunit">
    <text evidence="1">Homodimer.</text>
</comment>
<comment type="similarity">
    <text evidence="1">Belongs to the tRNA pseudouridine synthase TruA family.</text>
</comment>
<protein>
    <recommendedName>
        <fullName evidence="1">tRNA pseudouridine synthase A</fullName>
        <ecNumber evidence="1">5.4.99.12</ecNumber>
    </recommendedName>
    <alternativeName>
        <fullName evidence="1">tRNA pseudouridine(38-40) synthase</fullName>
    </alternativeName>
    <alternativeName>
        <fullName evidence="1">tRNA pseudouridylate synthase I</fullName>
    </alternativeName>
    <alternativeName>
        <fullName evidence="1">tRNA-uridine isomerase I</fullName>
    </alternativeName>
</protein>
<name>TRUA_BORRA</name>
<dbReference type="EC" id="5.4.99.12" evidence="1"/>
<dbReference type="EMBL" id="CP000993">
    <property type="protein sequence ID" value="ACH94279.1"/>
    <property type="molecule type" value="Genomic_DNA"/>
</dbReference>
<dbReference type="RefSeq" id="WP_012537788.1">
    <property type="nucleotide sequence ID" value="NZ_CP169983.1"/>
</dbReference>
<dbReference type="SMR" id="B5RQJ5"/>
<dbReference type="KEGG" id="bre:BRE_17"/>
<dbReference type="HOGENOM" id="CLU_014673_0_1_12"/>
<dbReference type="Proteomes" id="UP000000612">
    <property type="component" value="Chromosome"/>
</dbReference>
<dbReference type="GO" id="GO:0003723">
    <property type="term" value="F:RNA binding"/>
    <property type="evidence" value="ECO:0007669"/>
    <property type="project" value="InterPro"/>
</dbReference>
<dbReference type="GO" id="GO:0160147">
    <property type="term" value="F:tRNA pseudouridine(38-40) synthase activity"/>
    <property type="evidence" value="ECO:0007669"/>
    <property type="project" value="UniProtKB-EC"/>
</dbReference>
<dbReference type="GO" id="GO:0031119">
    <property type="term" value="P:tRNA pseudouridine synthesis"/>
    <property type="evidence" value="ECO:0007669"/>
    <property type="project" value="UniProtKB-UniRule"/>
</dbReference>
<dbReference type="CDD" id="cd02570">
    <property type="entry name" value="PseudoU_synth_EcTruA"/>
    <property type="match status" value="1"/>
</dbReference>
<dbReference type="FunFam" id="3.30.70.580:FF:000001">
    <property type="entry name" value="tRNA pseudouridine synthase A"/>
    <property type="match status" value="1"/>
</dbReference>
<dbReference type="Gene3D" id="3.30.70.660">
    <property type="entry name" value="Pseudouridine synthase I, catalytic domain, C-terminal subdomain"/>
    <property type="match status" value="1"/>
</dbReference>
<dbReference type="Gene3D" id="3.30.70.580">
    <property type="entry name" value="Pseudouridine synthase I, catalytic domain, N-terminal subdomain"/>
    <property type="match status" value="1"/>
</dbReference>
<dbReference type="HAMAP" id="MF_00171">
    <property type="entry name" value="TruA"/>
    <property type="match status" value="1"/>
</dbReference>
<dbReference type="InterPro" id="IPR020103">
    <property type="entry name" value="PsdUridine_synth_cat_dom_sf"/>
</dbReference>
<dbReference type="InterPro" id="IPR001406">
    <property type="entry name" value="PsdUridine_synth_TruA"/>
</dbReference>
<dbReference type="InterPro" id="IPR020097">
    <property type="entry name" value="PsdUridine_synth_TruA_a/b_dom"/>
</dbReference>
<dbReference type="InterPro" id="IPR020095">
    <property type="entry name" value="PsdUridine_synth_TruA_C"/>
</dbReference>
<dbReference type="InterPro" id="IPR020094">
    <property type="entry name" value="TruA/RsuA/RluB/E/F_N"/>
</dbReference>
<dbReference type="NCBIfam" id="TIGR00071">
    <property type="entry name" value="hisT_truA"/>
    <property type="match status" value="1"/>
</dbReference>
<dbReference type="PANTHER" id="PTHR11142">
    <property type="entry name" value="PSEUDOURIDYLATE SYNTHASE"/>
    <property type="match status" value="1"/>
</dbReference>
<dbReference type="PANTHER" id="PTHR11142:SF0">
    <property type="entry name" value="TRNA PSEUDOURIDINE SYNTHASE-LIKE 1"/>
    <property type="match status" value="1"/>
</dbReference>
<dbReference type="Pfam" id="PF01416">
    <property type="entry name" value="PseudoU_synth_1"/>
    <property type="match status" value="2"/>
</dbReference>
<dbReference type="PIRSF" id="PIRSF001430">
    <property type="entry name" value="tRNA_psdUrid_synth"/>
    <property type="match status" value="1"/>
</dbReference>
<dbReference type="SUPFAM" id="SSF55120">
    <property type="entry name" value="Pseudouridine synthase"/>
    <property type="match status" value="1"/>
</dbReference>
<proteinExistence type="inferred from homology"/>
<keyword id="KW-0413">Isomerase</keyword>
<keyword id="KW-0819">tRNA processing</keyword>
<evidence type="ECO:0000255" key="1">
    <source>
        <dbReference type="HAMAP-Rule" id="MF_00171"/>
    </source>
</evidence>